<name>NEC1_MUSCO</name>
<evidence type="ECO:0000250" key="1"/>
<evidence type="ECO:0000250" key="2">
    <source>
        <dbReference type="UniProtKB" id="P63239"/>
    </source>
</evidence>
<evidence type="ECO:0000255" key="3"/>
<evidence type="ECO:0000255" key="4">
    <source>
        <dbReference type="PROSITE-ProRule" id="PRU01173"/>
    </source>
</evidence>
<evidence type="ECO:0000255" key="5">
    <source>
        <dbReference type="PROSITE-ProRule" id="PRU01240"/>
    </source>
</evidence>
<evidence type="ECO:0000256" key="6">
    <source>
        <dbReference type="SAM" id="MobiDB-lite"/>
    </source>
</evidence>
<evidence type="ECO:0000305" key="7"/>
<gene>
    <name type="primary">Pcsk1</name>
    <name type="synonym">Att-1</name>
    <name type="synonym">Nec-1</name>
    <name type="synonym">Nec1</name>
</gene>
<keyword id="KW-0106">Calcium</keyword>
<keyword id="KW-0165">Cleavage on pair of basic residues</keyword>
<keyword id="KW-0968">Cytoplasmic vesicle</keyword>
<keyword id="KW-1015">Disulfide bond</keyword>
<keyword id="KW-0325">Glycoprotein</keyword>
<keyword id="KW-0378">Hydrolase</keyword>
<keyword id="KW-0645">Protease</keyword>
<keyword id="KW-0720">Serine protease</keyword>
<keyword id="KW-0732">Signal</keyword>
<keyword id="KW-0865">Zymogen</keyword>
<feature type="signal peptide" evidence="3">
    <location>
        <begin position="1"/>
        <end position="27"/>
    </location>
</feature>
<feature type="propeptide" id="PRO_0000027061" evidence="3">
    <location>
        <begin position="28"/>
        <end position="110"/>
    </location>
</feature>
<feature type="chain" id="PRO_0000027062" description="Neuroendocrine convertase 1">
    <location>
        <begin position="111"/>
        <end position="753"/>
    </location>
</feature>
<feature type="domain" description="Peptidase S8" evidence="5">
    <location>
        <begin position="129"/>
        <end position="450"/>
    </location>
</feature>
<feature type="domain" description="P/Homo B" evidence="4">
    <location>
        <begin position="460"/>
        <end position="597"/>
    </location>
</feature>
<feature type="region of interest" description="Disordered" evidence="6">
    <location>
        <begin position="633"/>
        <end position="663"/>
    </location>
</feature>
<feature type="compositionally biased region" description="Polar residues" evidence="6">
    <location>
        <begin position="633"/>
        <end position="651"/>
    </location>
</feature>
<feature type="active site" description="Charge relay system" evidence="5">
    <location>
        <position position="167"/>
    </location>
</feature>
<feature type="active site" description="Charge relay system" evidence="5">
    <location>
        <position position="208"/>
    </location>
</feature>
<feature type="active site" description="Charge relay system" evidence="5">
    <location>
        <position position="382"/>
    </location>
</feature>
<feature type="glycosylation site" description="N-linked (GlcNAc...) asparagine" evidence="3">
    <location>
        <position position="401"/>
    </location>
</feature>
<feature type="glycosylation site" description="N-linked (GlcNAc...) asparagine" evidence="3">
    <location>
        <position position="645"/>
    </location>
</feature>
<feature type="disulfide bond" evidence="1">
    <location>
        <begin position="225"/>
        <end position="374"/>
    </location>
</feature>
<feature type="disulfide bond" evidence="1">
    <location>
        <begin position="317"/>
        <end position="347"/>
    </location>
</feature>
<feature type="disulfide bond" evidence="1">
    <location>
        <begin position="467"/>
        <end position="494"/>
    </location>
</feature>
<proteinExistence type="evidence at transcript level"/>
<comment type="function">
    <text evidence="2">Involved in the processing of hormone and other protein precursors at sites comprised of pairs of basic amino acid residues. Substrates include POMC, renin, enkephalin, dynorphin, somatostatin, insulin and AGRP.</text>
</comment>
<comment type="catalytic activity">
    <reaction>
        <text>Release of protein hormones, neuropeptides and renin from their precursors, generally by hydrolysis of -Lys-Arg-|- bonds.</text>
        <dbReference type="EC" id="3.4.21.93"/>
    </reaction>
</comment>
<comment type="cofactor">
    <cofactor>
        <name>Ca(2+)</name>
        <dbReference type="ChEBI" id="CHEBI:29108"/>
    </cofactor>
</comment>
<comment type="subcellular location">
    <subcellularLocation>
        <location>Cytoplasmic vesicle</location>
        <location>Secretory vesicle</location>
    </subcellularLocation>
    <text>Localized in the secretion granules.</text>
</comment>
<comment type="similarity">
    <text evidence="7">Belongs to the peptidase S8 family. Furin subfamily.</text>
</comment>
<reference key="1">
    <citation type="journal article" date="1991" name="Proc. Natl. Acad. Sci. U.S.A.">
        <title>Identification of a cDNA encoding a second putative prohormone convertase related to PC2 in AtT20 cells and islets of Langerhans.</title>
        <authorList>
            <person name="Smeekens S.P."/>
            <person name="Avruch A.S."/>
            <person name="Lamendola J."/>
            <person name="Chan S.J."/>
            <person name="Steiner D.F."/>
        </authorList>
    </citation>
    <scope>NUCLEOTIDE SEQUENCE [MRNA]</scope>
</reference>
<accession>P63240</accession>
<accession>P21662</accession>
<accession>P22546</accession>
<sequence>MEQRGWTLQCTAFAFFCVWCALSSVKAKRQFVNEWAAEIPGGQEAASAIAEELGYDLLGQIGSLENHYLFKHKSHPRRSRRSALHITKRLSDDDRVTWAEQQYEKERSKRSVQKDSALDLFNDPMWNQQWYLQDTRMTAALPKLDLHVIPVWEKGITGKGVVITVLDDGLEWNHTDIYANYDPEASYDFNDNDHDPFPRYDLTNENKHGTRCAGEIAMQANNHKCGVGVAYNSKVGGIRMLDGIVTDAIEASSIGFNPGHVDIYSASWGPNDDGKTVEGPGRLAQKAFEYGVKQGRQGKGSIFVWASGNGGRQGDNCDCDGYTDSIYTISISSASQQGLSPWYAEKCSSTLATSYSSGDYTDQRITSADLHNDCTETHTGTSASAPLAAGIFALALEANPNLTWRDMQHLVVWTSEYDPLASNPGWKKNGAGLMVNSRFGFGLLNAKALVDLADPRTWRNVPEKKECVVKDNNFEPRALKANGEVIVEIPTRACEGQENAIKSLEHVQFEATIEYSRRGDLHVTLTSAVGTSTVLLAERERDTSPNGFKNWDFMSVHTWGENPVGTWTLKITDMSGRMQNEGRIVNWKLILHGTSSQPEHMKQPRVYTSYNTVQNDRRGVEKMVNVVEKRPTQKSLNGNLLVPKNSSSSNVEGRRDEQVQGTPSKAMLRLLQSAFSKNALSKQSPKKSPSAKLSIPYESFYEALEKLNKPSKLEGSEDSLYSDYVDVFYNTKPYKHRDDRLLQALMDILNEEN</sequence>
<dbReference type="EC" id="3.4.21.93"/>
<dbReference type="EMBL" id="M58507">
    <property type="protein sequence ID" value="AAA39896.1"/>
    <property type="molecule type" value="mRNA"/>
</dbReference>
<dbReference type="BMRB" id="P63240"/>
<dbReference type="SMR" id="P63240"/>
<dbReference type="MEROPS" id="S08.072"/>
<dbReference type="GlyCosmos" id="P63240">
    <property type="glycosylation" value="2 sites, No reported glycans"/>
</dbReference>
<dbReference type="KEGG" id="ag:AAA39896"/>
<dbReference type="MGI" id="MGI:97511">
    <property type="gene designation" value="Pcsk1"/>
</dbReference>
<dbReference type="GO" id="GO:0005788">
    <property type="term" value="C:endoplasmic reticulum lumen"/>
    <property type="evidence" value="ECO:0007669"/>
    <property type="project" value="UniProtKB-ARBA"/>
</dbReference>
<dbReference type="GO" id="GO:0005615">
    <property type="term" value="C:extracellular space"/>
    <property type="evidence" value="ECO:0007669"/>
    <property type="project" value="TreeGrafter"/>
</dbReference>
<dbReference type="GO" id="GO:0016020">
    <property type="term" value="C:membrane"/>
    <property type="evidence" value="ECO:0007669"/>
    <property type="project" value="TreeGrafter"/>
</dbReference>
<dbReference type="GO" id="GO:0043005">
    <property type="term" value="C:neuron projection"/>
    <property type="evidence" value="ECO:0007669"/>
    <property type="project" value="TreeGrafter"/>
</dbReference>
<dbReference type="GO" id="GO:0030133">
    <property type="term" value="C:transport vesicle"/>
    <property type="evidence" value="ECO:0007669"/>
    <property type="project" value="UniProtKB-SubCell"/>
</dbReference>
<dbReference type="GO" id="GO:0004252">
    <property type="term" value="F:serine-type endopeptidase activity"/>
    <property type="evidence" value="ECO:0007669"/>
    <property type="project" value="UniProtKB-EC"/>
</dbReference>
<dbReference type="GO" id="GO:0016486">
    <property type="term" value="P:peptide hormone processing"/>
    <property type="evidence" value="ECO:0007669"/>
    <property type="project" value="TreeGrafter"/>
</dbReference>
<dbReference type="CDD" id="cd04059">
    <property type="entry name" value="Peptidases_S8_Protein_convertases_Kexins_Furin-like"/>
    <property type="match status" value="1"/>
</dbReference>
<dbReference type="FunFam" id="6.10.250.3320:FF:000001">
    <property type="entry name" value="neuroendocrine convertase 1"/>
    <property type="match status" value="1"/>
</dbReference>
<dbReference type="FunFam" id="2.60.120.260:FF:000054">
    <property type="entry name" value="Proprotein convertase subtilisin/kexin type 1"/>
    <property type="match status" value="1"/>
</dbReference>
<dbReference type="FunFam" id="3.30.70.850:FF:000001">
    <property type="entry name" value="Proprotein convertase subtilisin/kexin type 5"/>
    <property type="match status" value="1"/>
</dbReference>
<dbReference type="FunFam" id="3.40.50.200:FF:000010">
    <property type="entry name" value="Putative neuroendocrine convertase 1"/>
    <property type="match status" value="1"/>
</dbReference>
<dbReference type="Gene3D" id="6.10.250.3320">
    <property type="match status" value="1"/>
</dbReference>
<dbReference type="Gene3D" id="2.60.120.260">
    <property type="entry name" value="Galactose-binding domain-like"/>
    <property type="match status" value="1"/>
</dbReference>
<dbReference type="Gene3D" id="3.30.70.850">
    <property type="entry name" value="Peptidase S8, pro-domain"/>
    <property type="match status" value="1"/>
</dbReference>
<dbReference type="Gene3D" id="3.40.50.200">
    <property type="entry name" value="Peptidase S8/S53 domain"/>
    <property type="match status" value="1"/>
</dbReference>
<dbReference type="InterPro" id="IPR008979">
    <property type="entry name" value="Galactose-bd-like_sf"/>
</dbReference>
<dbReference type="InterPro" id="IPR034182">
    <property type="entry name" value="Kexin/furin"/>
</dbReference>
<dbReference type="InterPro" id="IPR002884">
    <property type="entry name" value="P_dom"/>
</dbReference>
<dbReference type="InterPro" id="IPR000209">
    <property type="entry name" value="Peptidase_S8/S53_dom"/>
</dbReference>
<dbReference type="InterPro" id="IPR036852">
    <property type="entry name" value="Peptidase_S8/S53_dom_sf"/>
</dbReference>
<dbReference type="InterPro" id="IPR023827">
    <property type="entry name" value="Peptidase_S8_Asp-AS"/>
</dbReference>
<dbReference type="InterPro" id="IPR022398">
    <property type="entry name" value="Peptidase_S8_His-AS"/>
</dbReference>
<dbReference type="InterPro" id="IPR023828">
    <property type="entry name" value="Peptidase_S8_Ser-AS"/>
</dbReference>
<dbReference type="InterPro" id="IPR015500">
    <property type="entry name" value="Peptidase_S8_subtilisin-rel"/>
</dbReference>
<dbReference type="InterPro" id="IPR022005">
    <property type="entry name" value="Proho_convert"/>
</dbReference>
<dbReference type="InterPro" id="IPR032815">
    <property type="entry name" value="S8_pro-domain"/>
</dbReference>
<dbReference type="InterPro" id="IPR038466">
    <property type="entry name" value="S8_pro-domain_sf"/>
</dbReference>
<dbReference type="PANTHER" id="PTHR42884:SF14">
    <property type="entry name" value="NEUROENDOCRINE CONVERTASE 1"/>
    <property type="match status" value="1"/>
</dbReference>
<dbReference type="PANTHER" id="PTHR42884">
    <property type="entry name" value="PROPROTEIN CONVERTASE SUBTILISIN/KEXIN-RELATED"/>
    <property type="match status" value="1"/>
</dbReference>
<dbReference type="Pfam" id="PF01483">
    <property type="entry name" value="P_proprotein"/>
    <property type="match status" value="1"/>
</dbReference>
<dbReference type="Pfam" id="PF00082">
    <property type="entry name" value="Peptidase_S8"/>
    <property type="match status" value="1"/>
</dbReference>
<dbReference type="Pfam" id="PF12177">
    <property type="entry name" value="Proho_convert"/>
    <property type="match status" value="1"/>
</dbReference>
<dbReference type="Pfam" id="PF16470">
    <property type="entry name" value="S8_pro-domain"/>
    <property type="match status" value="1"/>
</dbReference>
<dbReference type="PRINTS" id="PR00723">
    <property type="entry name" value="SUBTILISIN"/>
</dbReference>
<dbReference type="SUPFAM" id="SSF49785">
    <property type="entry name" value="Galactose-binding domain-like"/>
    <property type="match status" value="1"/>
</dbReference>
<dbReference type="SUPFAM" id="SSF54897">
    <property type="entry name" value="Protease propeptides/inhibitors"/>
    <property type="match status" value="1"/>
</dbReference>
<dbReference type="SUPFAM" id="SSF52743">
    <property type="entry name" value="Subtilisin-like"/>
    <property type="match status" value="1"/>
</dbReference>
<dbReference type="PROSITE" id="PS51829">
    <property type="entry name" value="P_HOMO_B"/>
    <property type="match status" value="1"/>
</dbReference>
<dbReference type="PROSITE" id="PS51892">
    <property type="entry name" value="SUBTILASE"/>
    <property type="match status" value="1"/>
</dbReference>
<dbReference type="PROSITE" id="PS00136">
    <property type="entry name" value="SUBTILASE_ASP"/>
    <property type="match status" value="1"/>
</dbReference>
<dbReference type="PROSITE" id="PS00137">
    <property type="entry name" value="SUBTILASE_HIS"/>
    <property type="match status" value="1"/>
</dbReference>
<dbReference type="PROSITE" id="PS00138">
    <property type="entry name" value="SUBTILASE_SER"/>
    <property type="match status" value="1"/>
</dbReference>
<protein>
    <recommendedName>
        <fullName>Neuroendocrine convertase 1</fullName>
        <shortName>NEC 1</shortName>
        <ecNumber>3.4.21.93</ecNumber>
    </recommendedName>
    <alternativeName>
        <fullName>Furin homolog</fullName>
    </alternativeName>
    <alternativeName>
        <fullName>PC3</fullName>
    </alternativeName>
    <alternativeName>
        <fullName>Prohormone convertase 1</fullName>
    </alternativeName>
    <alternativeName>
        <fullName>Propeptide-processing protease</fullName>
    </alternativeName>
    <alternativeName>
        <fullName>Proprotein convertase 1</fullName>
        <shortName>PC1</shortName>
    </alternativeName>
</protein>
<organism>
    <name type="scientific">Mus cookii</name>
    <name type="common">Cook's mouse</name>
    <dbReference type="NCBI Taxonomy" id="10098"/>
    <lineage>
        <taxon>Eukaryota</taxon>
        <taxon>Metazoa</taxon>
        <taxon>Chordata</taxon>
        <taxon>Craniata</taxon>
        <taxon>Vertebrata</taxon>
        <taxon>Euteleostomi</taxon>
        <taxon>Mammalia</taxon>
        <taxon>Eutheria</taxon>
        <taxon>Euarchontoglires</taxon>
        <taxon>Glires</taxon>
        <taxon>Rodentia</taxon>
        <taxon>Myomorpha</taxon>
        <taxon>Muroidea</taxon>
        <taxon>Muridae</taxon>
        <taxon>Murinae</taxon>
        <taxon>Mus</taxon>
        <taxon>Mus</taxon>
    </lineage>
</organism>